<protein>
    <recommendedName>
        <fullName evidence="1">N-(5'-phosphoribosyl)anthranilate isomerase</fullName>
        <shortName evidence="1">PRAI</shortName>
        <ecNumber evidence="1">5.3.1.24</ecNumber>
    </recommendedName>
</protein>
<comment type="catalytic activity">
    <reaction evidence="1">
        <text>N-(5-phospho-beta-D-ribosyl)anthranilate = 1-(2-carboxyphenylamino)-1-deoxy-D-ribulose 5-phosphate</text>
        <dbReference type="Rhea" id="RHEA:21540"/>
        <dbReference type="ChEBI" id="CHEBI:18277"/>
        <dbReference type="ChEBI" id="CHEBI:58613"/>
        <dbReference type="EC" id="5.3.1.24"/>
    </reaction>
</comment>
<comment type="pathway">
    <text evidence="1">Amino-acid biosynthesis; L-tryptophan biosynthesis; L-tryptophan from chorismate: step 3/5.</text>
</comment>
<comment type="similarity">
    <text evidence="1">Belongs to the TrpF family.</text>
</comment>
<proteinExistence type="inferred from homology"/>
<gene>
    <name evidence="1" type="primary">trpF</name>
    <name type="ordered locus">Ava_2538</name>
</gene>
<sequence length="210" mass="22906">MRVKICGITQPQQSVAIASLGATALGFICVPSSPRYVTAAQIWAAVAPLPKNIDKIGVFANSSIAEIKQTVIDCGLTGVQLHGDETPEFCDQLRRSLPQVEILKALRVRSLEHLEQAIIYTQYINTLLLDAYHPQQLGGTGQTLDWQMLHKFHPSCPWLLAGGLTPDNILEALSQLNPDGIDLSSGVERKPGDKDLDKVALLFEKLGSRN</sequence>
<accession>Q3MA33</accession>
<dbReference type="EC" id="5.3.1.24" evidence="1"/>
<dbReference type="EMBL" id="CP000117">
    <property type="protein sequence ID" value="ABA22153.1"/>
    <property type="molecule type" value="Genomic_DNA"/>
</dbReference>
<dbReference type="SMR" id="Q3MA33"/>
<dbReference type="STRING" id="240292.Ava_2538"/>
<dbReference type="KEGG" id="ava:Ava_2538"/>
<dbReference type="eggNOG" id="COG0135">
    <property type="taxonomic scope" value="Bacteria"/>
</dbReference>
<dbReference type="HOGENOM" id="CLU_076364_2_0_3"/>
<dbReference type="UniPathway" id="UPA00035">
    <property type="reaction ID" value="UER00042"/>
</dbReference>
<dbReference type="Proteomes" id="UP000002533">
    <property type="component" value="Chromosome"/>
</dbReference>
<dbReference type="GO" id="GO:0004640">
    <property type="term" value="F:phosphoribosylanthranilate isomerase activity"/>
    <property type="evidence" value="ECO:0007669"/>
    <property type="project" value="UniProtKB-UniRule"/>
</dbReference>
<dbReference type="GO" id="GO:0000162">
    <property type="term" value="P:L-tryptophan biosynthetic process"/>
    <property type="evidence" value="ECO:0007669"/>
    <property type="project" value="UniProtKB-UniRule"/>
</dbReference>
<dbReference type="CDD" id="cd00405">
    <property type="entry name" value="PRAI"/>
    <property type="match status" value="1"/>
</dbReference>
<dbReference type="Gene3D" id="3.20.20.70">
    <property type="entry name" value="Aldolase class I"/>
    <property type="match status" value="1"/>
</dbReference>
<dbReference type="HAMAP" id="MF_00135">
    <property type="entry name" value="PRAI"/>
    <property type="match status" value="1"/>
</dbReference>
<dbReference type="InterPro" id="IPR013785">
    <property type="entry name" value="Aldolase_TIM"/>
</dbReference>
<dbReference type="InterPro" id="IPR001240">
    <property type="entry name" value="PRAI_dom"/>
</dbReference>
<dbReference type="InterPro" id="IPR011060">
    <property type="entry name" value="RibuloseP-bd_barrel"/>
</dbReference>
<dbReference type="InterPro" id="IPR044643">
    <property type="entry name" value="TrpF_fam"/>
</dbReference>
<dbReference type="NCBIfam" id="NF002298">
    <property type="entry name" value="PRK01222.1-4"/>
    <property type="match status" value="1"/>
</dbReference>
<dbReference type="PANTHER" id="PTHR42894">
    <property type="entry name" value="N-(5'-PHOSPHORIBOSYL)ANTHRANILATE ISOMERASE"/>
    <property type="match status" value="1"/>
</dbReference>
<dbReference type="PANTHER" id="PTHR42894:SF1">
    <property type="entry name" value="N-(5'-PHOSPHORIBOSYL)ANTHRANILATE ISOMERASE"/>
    <property type="match status" value="1"/>
</dbReference>
<dbReference type="Pfam" id="PF00697">
    <property type="entry name" value="PRAI"/>
    <property type="match status" value="1"/>
</dbReference>
<dbReference type="SUPFAM" id="SSF51366">
    <property type="entry name" value="Ribulose-phoshate binding barrel"/>
    <property type="match status" value="1"/>
</dbReference>
<feature type="chain" id="PRO_1000018576" description="N-(5'-phosphoribosyl)anthranilate isomerase">
    <location>
        <begin position="1"/>
        <end position="210"/>
    </location>
</feature>
<evidence type="ECO:0000255" key="1">
    <source>
        <dbReference type="HAMAP-Rule" id="MF_00135"/>
    </source>
</evidence>
<reference key="1">
    <citation type="journal article" date="2014" name="Stand. Genomic Sci.">
        <title>Complete genome sequence of Anabaena variabilis ATCC 29413.</title>
        <authorList>
            <person name="Thiel T."/>
            <person name="Pratte B.S."/>
            <person name="Zhong J."/>
            <person name="Goodwin L."/>
            <person name="Copeland A."/>
            <person name="Lucas S."/>
            <person name="Han C."/>
            <person name="Pitluck S."/>
            <person name="Land M.L."/>
            <person name="Kyrpides N.C."/>
            <person name="Woyke T."/>
        </authorList>
    </citation>
    <scope>NUCLEOTIDE SEQUENCE [LARGE SCALE GENOMIC DNA]</scope>
    <source>
        <strain>ATCC 29413 / PCC 7937</strain>
    </source>
</reference>
<keyword id="KW-0028">Amino-acid biosynthesis</keyword>
<keyword id="KW-0057">Aromatic amino acid biosynthesis</keyword>
<keyword id="KW-0413">Isomerase</keyword>
<keyword id="KW-0822">Tryptophan biosynthesis</keyword>
<organism>
    <name type="scientific">Trichormus variabilis (strain ATCC 29413 / PCC 7937)</name>
    <name type="common">Anabaena variabilis</name>
    <dbReference type="NCBI Taxonomy" id="240292"/>
    <lineage>
        <taxon>Bacteria</taxon>
        <taxon>Bacillati</taxon>
        <taxon>Cyanobacteriota</taxon>
        <taxon>Cyanophyceae</taxon>
        <taxon>Nostocales</taxon>
        <taxon>Nostocaceae</taxon>
        <taxon>Trichormus</taxon>
    </lineage>
</organism>
<name>TRPF_TRIV2</name>